<name>INO80_MOUSE</name>
<evidence type="ECO:0000250" key="1">
    <source>
        <dbReference type="UniProtKB" id="Q9ULG1"/>
    </source>
</evidence>
<evidence type="ECO:0000255" key="2">
    <source>
        <dbReference type="PROSITE-ProRule" id="PRU00541"/>
    </source>
</evidence>
<evidence type="ECO:0000255" key="3">
    <source>
        <dbReference type="PROSITE-ProRule" id="PRU00542"/>
    </source>
</evidence>
<evidence type="ECO:0000255" key="4">
    <source>
        <dbReference type="PROSITE-ProRule" id="PRU00746"/>
    </source>
</evidence>
<evidence type="ECO:0000256" key="5">
    <source>
        <dbReference type="SAM" id="MobiDB-lite"/>
    </source>
</evidence>
<evidence type="ECO:0000269" key="6">
    <source>
    </source>
</evidence>
<evidence type="ECO:0000269" key="7">
    <source>
    </source>
</evidence>
<evidence type="ECO:0000303" key="8">
    <source>
    </source>
</evidence>
<evidence type="ECO:0000305" key="9"/>
<comment type="function">
    <text evidence="1">ATPase component of the chromatin remodeling INO80 complex which is involved in transcriptional regulation, DNA replication and DNA repair. Binds DNA. As part of the INO80 complex, remodels chromatin by shifting nucleosomes. Regulates transcription upon recruitment by YY1 to YY1-activated genes, where it acts as an essential coactivator. Involved in UV-damage excision DNA repair. The contribution to DNA double-strand break repair appears to be largely indirect through transcriptional regulation. Involved in DNA replication. Required for microtubule assembly during mitosis thereby regulating chromosome segregation cycle.</text>
</comment>
<comment type="catalytic activity">
    <reaction evidence="1">
        <text>ATP + H2O = ADP + phosphate + H(+)</text>
        <dbReference type="Rhea" id="RHEA:13065"/>
        <dbReference type="ChEBI" id="CHEBI:15377"/>
        <dbReference type="ChEBI" id="CHEBI:15378"/>
        <dbReference type="ChEBI" id="CHEBI:30616"/>
        <dbReference type="ChEBI" id="CHEBI:43474"/>
        <dbReference type="ChEBI" id="CHEBI:456216"/>
    </reaction>
</comment>
<comment type="activity regulation">
    <text evidence="1">Activated upon binding to double stranded DNA or nucleosomes.</text>
</comment>
<comment type="subunit">
    <text evidence="1">Component of the chromatin remodeling INO80 complex; three different complex modules assemble on different domains of INO80. Interacts with DDB1. Interacts with transcriptional repressor protein YY1; the interaction recruits the INO80 complex to YY1 target genes. Interacts with YY1AP1. Interacts with tubulin alpha.</text>
</comment>
<comment type="subcellular location">
    <subcellularLocation>
        <location evidence="1">Cytoplasm</location>
    </subcellularLocation>
    <subcellularLocation>
        <location evidence="4 7">Nucleus</location>
    </subcellularLocation>
    <subcellularLocation>
        <location evidence="1">Cytoplasm</location>
        <location evidence="1">Cytoskeleton</location>
        <location evidence="1">Spindle</location>
    </subcellularLocation>
    <subcellularLocation>
        <location evidence="1">Chromosome</location>
    </subcellularLocation>
    <text evidence="1">Localizes to the cytoplasm in quiescent cell. Associates with spindle microtubules during mitosis. Colocalizes with PCNA at replication forks during S-phase. Recruited to DNA damage sites in a ACTR8-dependent manner.</text>
</comment>
<comment type="alternative products">
    <event type="alternative splicing"/>
    <isoform>
        <id>Q6ZPV2-1</id>
        <name>1</name>
        <sequence type="displayed"/>
    </isoform>
    <isoform>
        <id>Q6ZPV2-2</id>
        <name>2</name>
        <sequence type="described" ref="VSP_020334"/>
    </isoform>
</comment>
<comment type="tissue specificity">
    <text evidence="6">Widely expressed.</text>
</comment>
<comment type="domain">
    <text evidence="1">The DBINO region is involved in binding to DNA.</text>
</comment>
<comment type="similarity">
    <text evidence="9">Belongs to the SNF2/RAD54 helicase family.</text>
</comment>
<feature type="chain" id="PRO_0000248830" description="Chromatin-remodeling ATPase INO80">
    <location>
        <begin position="1"/>
        <end position="1559"/>
    </location>
</feature>
<feature type="domain" description="DBINO" evidence="4">
    <location>
        <begin position="282"/>
        <end position="407"/>
    </location>
</feature>
<feature type="domain" description="Helicase ATP-binding" evidence="2">
    <location>
        <begin position="532"/>
        <end position="703"/>
    </location>
</feature>
<feature type="domain" description="Helicase C-terminal" evidence="3">
    <location>
        <begin position="1108"/>
        <end position="1263"/>
    </location>
</feature>
<feature type="region of interest" description="Assembles INO80 complex module with putative regulatory components INO80E, INO80F, UCHL5, NFRKB, MCRS1 and IN80D" evidence="1">
    <location>
        <begin position="1"/>
        <end position="268"/>
    </location>
</feature>
<feature type="region of interest" description="Disordered" evidence="5">
    <location>
        <begin position="46"/>
        <end position="88"/>
    </location>
</feature>
<feature type="region of interest" description="Disordered" evidence="5">
    <location>
        <begin position="213"/>
        <end position="250"/>
    </location>
</feature>
<feature type="region of interest" description="Assembles INO80 complex module consisting of conserved components ACTR8, ACTL6A and YY1" evidence="1">
    <location>
        <begin position="214"/>
        <end position="528"/>
    </location>
</feature>
<feature type="region of interest" description="Assembles INO80 complex module consisting of conserved components INO80B, INO80C, ACTR5, RVBL1, RVBL2" evidence="1">
    <location>
        <begin position="523"/>
        <end position="1559"/>
    </location>
</feature>
<feature type="region of interest" description="Disordered" evidence="5">
    <location>
        <begin position="1285"/>
        <end position="1319"/>
    </location>
</feature>
<feature type="region of interest" description="Disordered" evidence="5">
    <location>
        <begin position="1391"/>
        <end position="1464"/>
    </location>
</feature>
<feature type="region of interest" description="Disordered" evidence="5">
    <location>
        <begin position="1504"/>
        <end position="1559"/>
    </location>
</feature>
<feature type="compositionally biased region" description="Basic residues" evidence="5">
    <location>
        <begin position="220"/>
        <end position="232"/>
    </location>
</feature>
<feature type="compositionally biased region" description="Basic and acidic residues" evidence="5">
    <location>
        <begin position="1285"/>
        <end position="1297"/>
    </location>
</feature>
<feature type="compositionally biased region" description="Basic and acidic residues" evidence="5">
    <location>
        <begin position="1306"/>
        <end position="1319"/>
    </location>
</feature>
<feature type="compositionally biased region" description="Polar residues" evidence="5">
    <location>
        <begin position="1393"/>
        <end position="1418"/>
    </location>
</feature>
<feature type="compositionally biased region" description="Low complexity" evidence="5">
    <location>
        <begin position="1510"/>
        <end position="1521"/>
    </location>
</feature>
<feature type="binding site" evidence="2">
    <location>
        <begin position="545"/>
        <end position="552"/>
    </location>
    <ligand>
        <name>ATP</name>
        <dbReference type="ChEBI" id="CHEBI:30616"/>
    </ligand>
</feature>
<feature type="modified residue" description="N6-acetyllysine" evidence="1">
    <location>
        <position position="118"/>
    </location>
</feature>
<feature type="modified residue" description="Phosphoserine" evidence="1">
    <location>
        <position position="1515"/>
    </location>
</feature>
<feature type="splice variant" id="VSP_020334" description="In isoform 2." evidence="8">
    <location>
        <begin position="608"/>
        <end position="614"/>
    </location>
</feature>
<accession>Q6ZPV2</accession>
<accession>A2AQP8</accession>
<accession>Q6P7V0</accession>
<accession>Q6PCP1</accession>
<accession>Q8C9T7</accession>
<gene>
    <name type="primary">Ino80</name>
    <name type="synonym">Inoc1</name>
    <name type="synonym">Kiaa1259</name>
</gene>
<organism>
    <name type="scientific">Mus musculus</name>
    <name type="common">Mouse</name>
    <dbReference type="NCBI Taxonomy" id="10090"/>
    <lineage>
        <taxon>Eukaryota</taxon>
        <taxon>Metazoa</taxon>
        <taxon>Chordata</taxon>
        <taxon>Craniata</taxon>
        <taxon>Vertebrata</taxon>
        <taxon>Euteleostomi</taxon>
        <taxon>Mammalia</taxon>
        <taxon>Eutheria</taxon>
        <taxon>Euarchontoglires</taxon>
        <taxon>Glires</taxon>
        <taxon>Rodentia</taxon>
        <taxon>Myomorpha</taxon>
        <taxon>Muroidea</taxon>
        <taxon>Muridae</taxon>
        <taxon>Murinae</taxon>
        <taxon>Mus</taxon>
        <taxon>Mus</taxon>
    </lineage>
</organism>
<dbReference type="EC" id="3.6.4.-" evidence="1"/>
<dbReference type="EMBL" id="AL844862">
    <property type="status" value="NOT_ANNOTATED_CDS"/>
    <property type="molecule type" value="Genomic_DNA"/>
</dbReference>
<dbReference type="EMBL" id="AK040612">
    <property type="protein sequence ID" value="BAC30644.1"/>
    <property type="molecule type" value="mRNA"/>
</dbReference>
<dbReference type="EMBL" id="AK129317">
    <property type="protein sequence ID" value="BAC98127.1"/>
    <property type="molecule type" value="Transcribed_RNA"/>
</dbReference>
<dbReference type="EMBL" id="BC059235">
    <property type="protein sequence ID" value="AAH59235.1"/>
    <property type="molecule type" value="mRNA"/>
</dbReference>
<dbReference type="CCDS" id="CCDS16602.1">
    <molecule id="Q6ZPV2-1"/>
</dbReference>
<dbReference type="RefSeq" id="NP_080850.2">
    <molecule id="Q6ZPV2-1"/>
    <property type="nucleotide sequence ID" value="NM_026574.3"/>
</dbReference>
<dbReference type="RefSeq" id="XP_036018407.1">
    <molecule id="Q6ZPV2-1"/>
    <property type="nucleotide sequence ID" value="XM_036162514.1"/>
</dbReference>
<dbReference type="SMR" id="Q6ZPV2"/>
<dbReference type="BioGRID" id="212678">
    <property type="interactions" value="5"/>
</dbReference>
<dbReference type="ComplexPortal" id="CPX-878">
    <property type="entry name" value="INO80 chromatin remodeling complex"/>
</dbReference>
<dbReference type="CORUM" id="Q6ZPV2"/>
<dbReference type="FunCoup" id="Q6ZPV2">
    <property type="interactions" value="5225"/>
</dbReference>
<dbReference type="IntAct" id="Q6ZPV2">
    <property type="interactions" value="6"/>
</dbReference>
<dbReference type="MINT" id="Q6ZPV2"/>
<dbReference type="STRING" id="10090.ENSMUSP00000051845"/>
<dbReference type="iPTMnet" id="Q6ZPV2"/>
<dbReference type="PhosphoSitePlus" id="Q6ZPV2"/>
<dbReference type="PaxDb" id="10090-ENSMUSP00000051845"/>
<dbReference type="PeptideAtlas" id="Q6ZPV2"/>
<dbReference type="ProteomicsDB" id="267339">
    <molecule id="Q6ZPV2-1"/>
</dbReference>
<dbReference type="ProteomicsDB" id="267340">
    <molecule id="Q6ZPV2-2"/>
</dbReference>
<dbReference type="Pumba" id="Q6ZPV2"/>
<dbReference type="Antibodypedia" id="42067">
    <property type="antibodies" value="84 antibodies from 23 providers"/>
</dbReference>
<dbReference type="DNASU" id="68142"/>
<dbReference type="Ensembl" id="ENSMUST00000049920.14">
    <molecule id="Q6ZPV2-1"/>
    <property type="protein sequence ID" value="ENSMUSP00000051845.8"/>
    <property type="gene ID" value="ENSMUSG00000034154.16"/>
</dbReference>
<dbReference type="GeneID" id="68142"/>
<dbReference type="KEGG" id="mmu:68142"/>
<dbReference type="UCSC" id="uc008ltt.2">
    <molecule id="Q6ZPV2-1"/>
    <property type="organism name" value="mouse"/>
</dbReference>
<dbReference type="AGR" id="MGI:1915392"/>
<dbReference type="CTD" id="54617"/>
<dbReference type="MGI" id="MGI:1915392">
    <property type="gene designation" value="Ino80"/>
</dbReference>
<dbReference type="VEuPathDB" id="HostDB:ENSMUSG00000034154"/>
<dbReference type="eggNOG" id="KOG0388">
    <property type="taxonomic scope" value="Eukaryota"/>
</dbReference>
<dbReference type="GeneTree" id="ENSGT00900000141110"/>
<dbReference type="HOGENOM" id="CLU_000315_19_1_1"/>
<dbReference type="InParanoid" id="Q6ZPV2"/>
<dbReference type="OMA" id="FWKKNER"/>
<dbReference type="OrthoDB" id="5847120at2759"/>
<dbReference type="PhylomeDB" id="Q6ZPV2"/>
<dbReference type="TreeFam" id="TF324408"/>
<dbReference type="Reactome" id="R-MMU-5689603">
    <property type="pathway name" value="UCH proteinases"/>
</dbReference>
<dbReference type="Reactome" id="R-MMU-5696394">
    <property type="pathway name" value="DNA Damage Recognition in GG-NER"/>
</dbReference>
<dbReference type="BioGRID-ORCS" id="68142">
    <property type="hits" value="19 hits in 120 CRISPR screens"/>
</dbReference>
<dbReference type="ChiTaRS" id="Ino80">
    <property type="organism name" value="mouse"/>
</dbReference>
<dbReference type="PRO" id="PR:Q6ZPV2"/>
<dbReference type="Proteomes" id="UP000000589">
    <property type="component" value="Chromosome 2"/>
</dbReference>
<dbReference type="RNAct" id="Q6ZPV2">
    <property type="molecule type" value="protein"/>
</dbReference>
<dbReference type="Bgee" id="ENSMUSG00000034154">
    <property type="expression patterns" value="Expressed in inner cell mass derived hypoblast and 231 other cell types or tissues"/>
</dbReference>
<dbReference type="ExpressionAtlas" id="Q6ZPV2">
    <property type="expression patterns" value="baseline and differential"/>
</dbReference>
<dbReference type="GO" id="GO:0005829">
    <property type="term" value="C:cytosol"/>
    <property type="evidence" value="ECO:0007669"/>
    <property type="project" value="Ensembl"/>
</dbReference>
<dbReference type="GO" id="GO:0031011">
    <property type="term" value="C:Ino80 complex"/>
    <property type="evidence" value="ECO:0000266"/>
    <property type="project" value="ComplexPortal"/>
</dbReference>
<dbReference type="GO" id="GO:0005874">
    <property type="term" value="C:microtubule"/>
    <property type="evidence" value="ECO:0007669"/>
    <property type="project" value="UniProtKB-KW"/>
</dbReference>
<dbReference type="GO" id="GO:0016604">
    <property type="term" value="C:nuclear body"/>
    <property type="evidence" value="ECO:0007669"/>
    <property type="project" value="Ensembl"/>
</dbReference>
<dbReference type="GO" id="GO:0005634">
    <property type="term" value="C:nucleus"/>
    <property type="evidence" value="ECO:0000250"/>
    <property type="project" value="UniProtKB"/>
</dbReference>
<dbReference type="GO" id="GO:0005819">
    <property type="term" value="C:spindle"/>
    <property type="evidence" value="ECO:0007669"/>
    <property type="project" value="UniProtKB-SubCell"/>
</dbReference>
<dbReference type="GO" id="GO:0003779">
    <property type="term" value="F:actin binding"/>
    <property type="evidence" value="ECO:0007669"/>
    <property type="project" value="UniProtKB-KW"/>
</dbReference>
<dbReference type="GO" id="GO:0043014">
    <property type="term" value="F:alpha-tubulin binding"/>
    <property type="evidence" value="ECO:0007669"/>
    <property type="project" value="Ensembl"/>
</dbReference>
<dbReference type="GO" id="GO:0005524">
    <property type="term" value="F:ATP binding"/>
    <property type="evidence" value="ECO:0007669"/>
    <property type="project" value="UniProtKB-KW"/>
</dbReference>
<dbReference type="GO" id="GO:0016887">
    <property type="term" value="F:ATP hydrolysis activity"/>
    <property type="evidence" value="ECO:0007669"/>
    <property type="project" value="RHEA"/>
</dbReference>
<dbReference type="GO" id="GO:0008094">
    <property type="term" value="F:ATP-dependent activity, acting on DNA"/>
    <property type="evidence" value="ECO:0000250"/>
    <property type="project" value="UniProtKB"/>
</dbReference>
<dbReference type="GO" id="GO:0140658">
    <property type="term" value="F:ATP-dependent chromatin remodeler activity"/>
    <property type="evidence" value="ECO:0007669"/>
    <property type="project" value="InterPro"/>
</dbReference>
<dbReference type="GO" id="GO:0003677">
    <property type="term" value="F:DNA binding"/>
    <property type="evidence" value="ECO:0000250"/>
    <property type="project" value="UniProtKB"/>
</dbReference>
<dbReference type="GO" id="GO:0051301">
    <property type="term" value="P:cell division"/>
    <property type="evidence" value="ECO:0007669"/>
    <property type="project" value="UniProtKB-KW"/>
</dbReference>
<dbReference type="GO" id="GO:0071479">
    <property type="term" value="P:cellular response to ionizing radiation"/>
    <property type="evidence" value="ECO:0007669"/>
    <property type="project" value="Ensembl"/>
</dbReference>
<dbReference type="GO" id="GO:0006338">
    <property type="term" value="P:chromatin remodeling"/>
    <property type="evidence" value="ECO:0000266"/>
    <property type="project" value="ComplexPortal"/>
</dbReference>
<dbReference type="GO" id="GO:0006351">
    <property type="term" value="P:DNA-templated transcription"/>
    <property type="evidence" value="ECO:0007669"/>
    <property type="project" value="InterPro"/>
</dbReference>
<dbReference type="GO" id="GO:0000724">
    <property type="term" value="P:double-strand break repair via homologous recombination"/>
    <property type="evidence" value="ECO:0007669"/>
    <property type="project" value="Ensembl"/>
</dbReference>
<dbReference type="GO" id="GO:0000070">
    <property type="term" value="P:mitotic sister chromatid segregation"/>
    <property type="evidence" value="ECO:0007669"/>
    <property type="project" value="Ensembl"/>
</dbReference>
<dbReference type="GO" id="GO:0030307">
    <property type="term" value="P:positive regulation of cell growth"/>
    <property type="evidence" value="ECO:0007669"/>
    <property type="project" value="Ensembl"/>
</dbReference>
<dbReference type="GO" id="GO:0045739">
    <property type="term" value="P:positive regulation of DNA repair"/>
    <property type="evidence" value="ECO:0000314"/>
    <property type="project" value="ComplexPortal"/>
</dbReference>
<dbReference type="GO" id="GO:0045893">
    <property type="term" value="P:positive regulation of DNA-templated transcription"/>
    <property type="evidence" value="ECO:0000266"/>
    <property type="project" value="ComplexPortal"/>
</dbReference>
<dbReference type="GO" id="GO:0010571">
    <property type="term" value="P:positive regulation of nuclear cell cycle DNA replication"/>
    <property type="evidence" value="ECO:0007669"/>
    <property type="project" value="Ensembl"/>
</dbReference>
<dbReference type="GO" id="GO:1904507">
    <property type="term" value="P:positive regulation of telomere maintenance in response to DNA damage"/>
    <property type="evidence" value="ECO:0000315"/>
    <property type="project" value="ComplexPortal"/>
</dbReference>
<dbReference type="GO" id="GO:0045944">
    <property type="term" value="P:positive regulation of transcription by RNA polymerase II"/>
    <property type="evidence" value="ECO:0007669"/>
    <property type="project" value="Ensembl"/>
</dbReference>
<dbReference type="GO" id="GO:0051726">
    <property type="term" value="P:regulation of cell cycle"/>
    <property type="evidence" value="ECO:0000266"/>
    <property type="project" value="ComplexPortal"/>
</dbReference>
<dbReference type="GO" id="GO:0033044">
    <property type="term" value="P:regulation of chromosome organization"/>
    <property type="evidence" value="ECO:0000266"/>
    <property type="project" value="ComplexPortal"/>
</dbReference>
<dbReference type="GO" id="GO:0006282">
    <property type="term" value="P:regulation of DNA repair"/>
    <property type="evidence" value="ECO:0000314"/>
    <property type="project" value="ComplexPortal"/>
</dbReference>
<dbReference type="GO" id="GO:0006275">
    <property type="term" value="P:regulation of DNA replication"/>
    <property type="evidence" value="ECO:0000266"/>
    <property type="project" value="ComplexPortal"/>
</dbReference>
<dbReference type="GO" id="GO:0060382">
    <property type="term" value="P:regulation of DNA strand elongation"/>
    <property type="evidence" value="ECO:0000266"/>
    <property type="project" value="ComplexPortal"/>
</dbReference>
<dbReference type="GO" id="GO:0045995">
    <property type="term" value="P:regulation of embryonic development"/>
    <property type="evidence" value="ECO:0000315"/>
    <property type="project" value="ComplexPortal"/>
</dbReference>
<dbReference type="GO" id="GO:2000045">
    <property type="term" value="P:regulation of G1/S transition of mitotic cell cycle"/>
    <property type="evidence" value="ECO:0007669"/>
    <property type="project" value="Ensembl"/>
</dbReference>
<dbReference type="GO" id="GO:0051225">
    <property type="term" value="P:spindle assembly"/>
    <property type="evidence" value="ECO:0007669"/>
    <property type="project" value="Ensembl"/>
</dbReference>
<dbReference type="GO" id="GO:0000723">
    <property type="term" value="P:telomere maintenance"/>
    <property type="evidence" value="ECO:0000315"/>
    <property type="project" value="ComplexPortal"/>
</dbReference>
<dbReference type="GO" id="GO:0070914">
    <property type="term" value="P:UV-damage excision repair"/>
    <property type="evidence" value="ECO:0007669"/>
    <property type="project" value="Ensembl"/>
</dbReference>
<dbReference type="CDD" id="cd18002">
    <property type="entry name" value="DEXQc_INO80"/>
    <property type="match status" value="1"/>
</dbReference>
<dbReference type="CDD" id="cd18793">
    <property type="entry name" value="SF2_C_SNF"/>
    <property type="match status" value="1"/>
</dbReference>
<dbReference type="FunFam" id="3.40.50.300:FF:000747">
    <property type="entry name" value="DNA helicase INO80 isoform X1"/>
    <property type="match status" value="1"/>
</dbReference>
<dbReference type="FunFam" id="3.40.50.300:FF:003788">
    <property type="entry name" value="INO80 complex subunit"/>
    <property type="match status" value="1"/>
</dbReference>
<dbReference type="FunFam" id="3.40.50.10810:FF:000006">
    <property type="entry name" value="Putative DNA helicase INO80"/>
    <property type="match status" value="1"/>
</dbReference>
<dbReference type="Gene3D" id="3.40.50.300">
    <property type="entry name" value="P-loop containing nucleotide triphosphate hydrolases"/>
    <property type="match status" value="2"/>
</dbReference>
<dbReference type="Gene3D" id="3.40.50.10810">
    <property type="entry name" value="Tandem AAA-ATPase domain"/>
    <property type="match status" value="1"/>
</dbReference>
<dbReference type="InterPro" id="IPR020838">
    <property type="entry name" value="DBINO"/>
</dbReference>
<dbReference type="InterPro" id="IPR031047">
    <property type="entry name" value="DEXQc_INO80"/>
</dbReference>
<dbReference type="InterPro" id="IPR014001">
    <property type="entry name" value="Helicase_ATP-bd"/>
</dbReference>
<dbReference type="InterPro" id="IPR001650">
    <property type="entry name" value="Helicase_C-like"/>
</dbReference>
<dbReference type="InterPro" id="IPR050520">
    <property type="entry name" value="INO80/SWR1_helicase"/>
</dbReference>
<dbReference type="InterPro" id="IPR027417">
    <property type="entry name" value="P-loop_NTPase"/>
</dbReference>
<dbReference type="InterPro" id="IPR038718">
    <property type="entry name" value="SNF2-like_sf"/>
</dbReference>
<dbReference type="InterPro" id="IPR049730">
    <property type="entry name" value="SNF2/RAD54-like_C"/>
</dbReference>
<dbReference type="InterPro" id="IPR000330">
    <property type="entry name" value="SNF2_N"/>
</dbReference>
<dbReference type="PANTHER" id="PTHR45685:SF2">
    <property type="entry name" value="CHROMATIN-REMODELING ATPASE INO80"/>
    <property type="match status" value="1"/>
</dbReference>
<dbReference type="PANTHER" id="PTHR45685">
    <property type="entry name" value="HELICASE SRCAP-RELATED"/>
    <property type="match status" value="1"/>
</dbReference>
<dbReference type="Pfam" id="PF13892">
    <property type="entry name" value="DBINO"/>
    <property type="match status" value="1"/>
</dbReference>
<dbReference type="Pfam" id="PF00271">
    <property type="entry name" value="Helicase_C"/>
    <property type="match status" value="1"/>
</dbReference>
<dbReference type="Pfam" id="PF00176">
    <property type="entry name" value="SNF2-rel_dom"/>
    <property type="match status" value="1"/>
</dbReference>
<dbReference type="SMART" id="SM00487">
    <property type="entry name" value="DEXDc"/>
    <property type="match status" value="1"/>
</dbReference>
<dbReference type="SMART" id="SM00490">
    <property type="entry name" value="HELICc"/>
    <property type="match status" value="1"/>
</dbReference>
<dbReference type="SUPFAM" id="SSF52540">
    <property type="entry name" value="P-loop containing nucleoside triphosphate hydrolases"/>
    <property type="match status" value="2"/>
</dbReference>
<dbReference type="PROSITE" id="PS51413">
    <property type="entry name" value="DBINO"/>
    <property type="match status" value="1"/>
</dbReference>
<dbReference type="PROSITE" id="PS51192">
    <property type="entry name" value="HELICASE_ATP_BIND_1"/>
    <property type="match status" value="1"/>
</dbReference>
<dbReference type="PROSITE" id="PS51194">
    <property type="entry name" value="HELICASE_CTER"/>
    <property type="match status" value="1"/>
</dbReference>
<proteinExistence type="evidence at protein level"/>
<keyword id="KW-0007">Acetylation</keyword>
<keyword id="KW-0009">Actin-binding</keyword>
<keyword id="KW-0025">Alternative splicing</keyword>
<keyword id="KW-0067">ATP-binding</keyword>
<keyword id="KW-0131">Cell cycle</keyword>
<keyword id="KW-0132">Cell division</keyword>
<keyword id="KW-0158">Chromosome</keyword>
<keyword id="KW-0963">Cytoplasm</keyword>
<keyword id="KW-0206">Cytoskeleton</keyword>
<keyword id="KW-0227">DNA damage</keyword>
<keyword id="KW-0233">DNA recombination</keyword>
<keyword id="KW-0234">DNA repair</keyword>
<keyword id="KW-0238">DNA-binding</keyword>
<keyword id="KW-0378">Hydrolase</keyword>
<keyword id="KW-0493">Microtubule</keyword>
<keyword id="KW-0498">Mitosis</keyword>
<keyword id="KW-0547">Nucleotide-binding</keyword>
<keyword id="KW-0539">Nucleus</keyword>
<keyword id="KW-0597">Phosphoprotein</keyword>
<keyword id="KW-1185">Reference proteome</keyword>
<reference key="1">
    <citation type="journal article" date="2009" name="PLoS Biol.">
        <title>Lineage-specific biology revealed by a finished genome assembly of the mouse.</title>
        <authorList>
            <person name="Church D.M."/>
            <person name="Goodstadt L."/>
            <person name="Hillier L.W."/>
            <person name="Zody M.C."/>
            <person name="Goldstein S."/>
            <person name="She X."/>
            <person name="Bult C.J."/>
            <person name="Agarwala R."/>
            <person name="Cherry J.L."/>
            <person name="DiCuccio M."/>
            <person name="Hlavina W."/>
            <person name="Kapustin Y."/>
            <person name="Meric P."/>
            <person name="Maglott D."/>
            <person name="Birtle Z."/>
            <person name="Marques A.C."/>
            <person name="Graves T."/>
            <person name="Zhou S."/>
            <person name="Teague B."/>
            <person name="Potamousis K."/>
            <person name="Churas C."/>
            <person name="Place M."/>
            <person name="Herschleb J."/>
            <person name="Runnheim R."/>
            <person name="Forrest D."/>
            <person name="Amos-Landgraf J."/>
            <person name="Schwartz D.C."/>
            <person name="Cheng Z."/>
            <person name="Lindblad-Toh K."/>
            <person name="Eichler E.E."/>
            <person name="Ponting C.P."/>
        </authorList>
    </citation>
    <scope>NUCLEOTIDE SEQUENCE [LARGE SCALE GENOMIC DNA]</scope>
    <source>
        <strain>C57BL/6J</strain>
    </source>
</reference>
<reference key="2">
    <citation type="journal article" date="2005" name="Science">
        <title>The transcriptional landscape of the mammalian genome.</title>
        <authorList>
            <person name="Carninci P."/>
            <person name="Kasukawa T."/>
            <person name="Katayama S."/>
            <person name="Gough J."/>
            <person name="Frith M.C."/>
            <person name="Maeda N."/>
            <person name="Oyama R."/>
            <person name="Ravasi T."/>
            <person name="Lenhard B."/>
            <person name="Wells C."/>
            <person name="Kodzius R."/>
            <person name="Shimokawa K."/>
            <person name="Bajic V.B."/>
            <person name="Brenner S.E."/>
            <person name="Batalov S."/>
            <person name="Forrest A.R."/>
            <person name="Zavolan M."/>
            <person name="Davis M.J."/>
            <person name="Wilming L.G."/>
            <person name="Aidinis V."/>
            <person name="Allen J.E."/>
            <person name="Ambesi-Impiombato A."/>
            <person name="Apweiler R."/>
            <person name="Aturaliya R.N."/>
            <person name="Bailey T.L."/>
            <person name="Bansal M."/>
            <person name="Baxter L."/>
            <person name="Beisel K.W."/>
            <person name="Bersano T."/>
            <person name="Bono H."/>
            <person name="Chalk A.M."/>
            <person name="Chiu K.P."/>
            <person name="Choudhary V."/>
            <person name="Christoffels A."/>
            <person name="Clutterbuck D.R."/>
            <person name="Crowe M.L."/>
            <person name="Dalla E."/>
            <person name="Dalrymple B.P."/>
            <person name="de Bono B."/>
            <person name="Della Gatta G."/>
            <person name="di Bernardo D."/>
            <person name="Down T."/>
            <person name="Engstrom P."/>
            <person name="Fagiolini M."/>
            <person name="Faulkner G."/>
            <person name="Fletcher C.F."/>
            <person name="Fukushima T."/>
            <person name="Furuno M."/>
            <person name="Futaki S."/>
            <person name="Gariboldi M."/>
            <person name="Georgii-Hemming P."/>
            <person name="Gingeras T.R."/>
            <person name="Gojobori T."/>
            <person name="Green R.E."/>
            <person name="Gustincich S."/>
            <person name="Harbers M."/>
            <person name="Hayashi Y."/>
            <person name="Hensch T.K."/>
            <person name="Hirokawa N."/>
            <person name="Hill D."/>
            <person name="Huminiecki L."/>
            <person name="Iacono M."/>
            <person name="Ikeo K."/>
            <person name="Iwama A."/>
            <person name="Ishikawa T."/>
            <person name="Jakt M."/>
            <person name="Kanapin A."/>
            <person name="Katoh M."/>
            <person name="Kawasawa Y."/>
            <person name="Kelso J."/>
            <person name="Kitamura H."/>
            <person name="Kitano H."/>
            <person name="Kollias G."/>
            <person name="Krishnan S.P."/>
            <person name="Kruger A."/>
            <person name="Kummerfeld S.K."/>
            <person name="Kurochkin I.V."/>
            <person name="Lareau L.F."/>
            <person name="Lazarevic D."/>
            <person name="Lipovich L."/>
            <person name="Liu J."/>
            <person name="Liuni S."/>
            <person name="McWilliam S."/>
            <person name="Madan Babu M."/>
            <person name="Madera M."/>
            <person name="Marchionni L."/>
            <person name="Matsuda H."/>
            <person name="Matsuzawa S."/>
            <person name="Miki H."/>
            <person name="Mignone F."/>
            <person name="Miyake S."/>
            <person name="Morris K."/>
            <person name="Mottagui-Tabar S."/>
            <person name="Mulder N."/>
            <person name="Nakano N."/>
            <person name="Nakauchi H."/>
            <person name="Ng P."/>
            <person name="Nilsson R."/>
            <person name="Nishiguchi S."/>
            <person name="Nishikawa S."/>
            <person name="Nori F."/>
            <person name="Ohara O."/>
            <person name="Okazaki Y."/>
            <person name="Orlando V."/>
            <person name="Pang K.C."/>
            <person name="Pavan W.J."/>
            <person name="Pavesi G."/>
            <person name="Pesole G."/>
            <person name="Petrovsky N."/>
            <person name="Piazza S."/>
            <person name="Reed J."/>
            <person name="Reid J.F."/>
            <person name="Ring B.Z."/>
            <person name="Ringwald M."/>
            <person name="Rost B."/>
            <person name="Ruan Y."/>
            <person name="Salzberg S.L."/>
            <person name="Sandelin A."/>
            <person name="Schneider C."/>
            <person name="Schoenbach C."/>
            <person name="Sekiguchi K."/>
            <person name="Semple C.A."/>
            <person name="Seno S."/>
            <person name="Sessa L."/>
            <person name="Sheng Y."/>
            <person name="Shibata Y."/>
            <person name="Shimada H."/>
            <person name="Shimada K."/>
            <person name="Silva D."/>
            <person name="Sinclair B."/>
            <person name="Sperling S."/>
            <person name="Stupka E."/>
            <person name="Sugiura K."/>
            <person name="Sultana R."/>
            <person name="Takenaka Y."/>
            <person name="Taki K."/>
            <person name="Tammoja K."/>
            <person name="Tan S.L."/>
            <person name="Tang S."/>
            <person name="Taylor M.S."/>
            <person name="Tegner J."/>
            <person name="Teichmann S.A."/>
            <person name="Ueda H.R."/>
            <person name="van Nimwegen E."/>
            <person name="Verardo R."/>
            <person name="Wei C.L."/>
            <person name="Yagi K."/>
            <person name="Yamanishi H."/>
            <person name="Zabarovsky E."/>
            <person name="Zhu S."/>
            <person name="Zimmer A."/>
            <person name="Hide W."/>
            <person name="Bult C."/>
            <person name="Grimmond S.M."/>
            <person name="Teasdale R.D."/>
            <person name="Liu E.T."/>
            <person name="Brusic V."/>
            <person name="Quackenbush J."/>
            <person name="Wahlestedt C."/>
            <person name="Mattick J.S."/>
            <person name="Hume D.A."/>
            <person name="Kai C."/>
            <person name="Sasaki D."/>
            <person name="Tomaru Y."/>
            <person name="Fukuda S."/>
            <person name="Kanamori-Katayama M."/>
            <person name="Suzuki M."/>
            <person name="Aoki J."/>
            <person name="Arakawa T."/>
            <person name="Iida J."/>
            <person name="Imamura K."/>
            <person name="Itoh M."/>
            <person name="Kato T."/>
            <person name="Kawaji H."/>
            <person name="Kawagashira N."/>
            <person name="Kawashima T."/>
            <person name="Kojima M."/>
            <person name="Kondo S."/>
            <person name="Konno H."/>
            <person name="Nakano K."/>
            <person name="Ninomiya N."/>
            <person name="Nishio T."/>
            <person name="Okada M."/>
            <person name="Plessy C."/>
            <person name="Shibata K."/>
            <person name="Shiraki T."/>
            <person name="Suzuki S."/>
            <person name="Tagami M."/>
            <person name="Waki K."/>
            <person name="Watahiki A."/>
            <person name="Okamura-Oho Y."/>
            <person name="Suzuki H."/>
            <person name="Kawai J."/>
            <person name="Hayashizaki Y."/>
        </authorList>
    </citation>
    <scope>NUCLEOTIDE SEQUENCE [LARGE SCALE MRNA] OF 1-746 (ISOFORM 1)</scope>
    <source>
        <strain>C57BL/6J</strain>
        <tissue>Thymus</tissue>
    </source>
</reference>
<reference key="3">
    <citation type="journal article" date="2003" name="DNA Res.">
        <title>Prediction of the coding sequences of mouse homologues of KIAA gene: III. The complete nucleotide sequences of 500 mouse KIAA-homologous cDNAs identified by screening of terminal sequences of cDNA clones randomly sampled from size-fractionated libraries.</title>
        <authorList>
            <person name="Okazaki N."/>
            <person name="Kikuno R."/>
            <person name="Ohara R."/>
            <person name="Inamoto S."/>
            <person name="Koseki H."/>
            <person name="Hiraoka S."/>
            <person name="Saga Y."/>
            <person name="Nagase T."/>
            <person name="Ohara O."/>
            <person name="Koga H."/>
        </authorList>
    </citation>
    <scope>NUCLEOTIDE SEQUENCE [LARGE SCALE MRNA] OF 357-1559 (ISOFORM 2)</scope>
</reference>
<reference key="4">
    <citation type="journal article" date="2004" name="Genome Res.">
        <title>The status, quality, and expansion of the NIH full-length cDNA project: the Mammalian Gene Collection (MGC).</title>
        <authorList>
            <consortium name="The MGC Project Team"/>
        </authorList>
    </citation>
    <scope>NUCLEOTIDE SEQUENCE [LARGE SCALE MRNA] OF 472-1559 (ISOFORM 1)</scope>
    <source>
        <strain>C57BL/6J</strain>
        <tissue>Brain</tissue>
    </source>
</reference>
<reference key="5">
    <citation type="journal article" date="2006" name="Biochem. Biophys. Res. Commun.">
        <title>Characterization of a human SWI2/SNF2 like protein hINO80: demonstration of catalytic and DNA binding activity.</title>
        <authorList>
            <person name="Bakshi R."/>
            <person name="Mehta A.K."/>
            <person name="Sharma R."/>
            <person name="Maiti S."/>
            <person name="Pasha S."/>
            <person name="Brahmachari V."/>
        </authorList>
    </citation>
    <scope>TISSUE SPECIFICITY</scope>
</reference>
<reference key="6">
    <citation type="journal article" date="2010" name="Biochem. Biophys. Res. Commun.">
        <title>The mammalian INO80 complex is recruited to DNA damage sites in an ARP8 dependent manner.</title>
        <authorList>
            <person name="Kashiwaba S."/>
            <person name="Kitahashi K."/>
            <person name="Watanabe T."/>
            <person name="Onoda F."/>
            <person name="Ohtsu M."/>
            <person name="Murakami Y."/>
        </authorList>
    </citation>
    <scope>SUBCELLULAR LOCATION</scope>
</reference>
<reference key="7">
    <citation type="journal article" date="2010" name="Cell">
        <title>A tissue-specific atlas of mouse protein phosphorylation and expression.</title>
        <authorList>
            <person name="Huttlin E.L."/>
            <person name="Jedrychowski M.P."/>
            <person name="Elias J.E."/>
            <person name="Goswami T."/>
            <person name="Rad R."/>
            <person name="Beausoleil S.A."/>
            <person name="Villen J."/>
            <person name="Haas W."/>
            <person name="Sowa M.E."/>
            <person name="Gygi S.P."/>
        </authorList>
    </citation>
    <scope>IDENTIFICATION BY MASS SPECTROMETRY [LARGE SCALE ANALYSIS]</scope>
    <source>
        <tissue>Lung</tissue>
    </source>
</reference>
<sequence length="1559" mass="176520">MASELGAGDDGSSTELAKPLYLQYLERALRLDHFLRQTSAIFNRNISSDDSEDGLDDNNPLLPESGDPLIQVKEEPPNSLLGETSGASSSGLLNPYSLNGVLQSESKSDKGNLYNFSKLKKSRKWLKSILLSDESSEADSQSEDNDDEEEELSLSREELHNMLRLHKYKKLHQNKYSKDKELQQYQYYSAGLLSTYDPFYEQQRHLLGPKKKKFKEDKKLKAKLKKVKKKRRRDEEFSSEESPRHHHHQTKVFAKFSHDAPPPGTKKKHLSIEQLNARRRKVWLSIVKKELPKANKQKSSARNLFLTNSRKLAHQCMKEVRRAALQAQKNCKETLPRARRLTKEMLLYWKKYEKVEKEHRKRAEKEALEQRKLDEEMREAKRQQRKLNFLITQTELYAHFMSRKRDMGHDGIQEEILRKLEDSSTQRQIDIGGGVVVNITQEDYDSNHFKAQALKNAENAYHIHQARTRSFDEDAKESRAAALRAADKSGSGFGESYSLANPSIRAGEDIPQPTIFNGKLKGYQLKGMNWLANLYEQGINGILADEMGLGKTVQSIALLAHLAERENIWGPFLIISPASTLNNWHQEFTRFVPKFKVLPYWGNPHDRKVIRRFWSQKTLYTQDAPFHVVITSYQLVVQDVKYFQRVKWQYMVLDEAQALKSSSSVRWKILLQFQCRNRLLLTGTPIQNTMAELWALLHFIMPTLFDSHEEFNEWFSKDIESHAENKSAIDENQLSRLHMILKPFMLRRIKKDVENELSDKIEILTYCQLTSRQKLLYQALKNKISIEDLLQSSMGSTQQAQNTTSSLMNLVMQFRKVCNHPELFERQETWSPFHISLKPYEISKFIYRHGQIRVFNHSRDRWLKVLLSPFAPDYIQQSLFHRKGINEGSCFSFLRFIDVSPAEMANLMLQGLLARWLALFLSLKASYRLHQLRSWAEPDGTSHQSYLRNKDFLLGVDFPLSFPNLCSCPLLKSLVFSSHCKAVSGYSDHVVHQRRSATSSLRCCLLTELPSFLCVASPRVTAVPLDSYCNDRSAEYERGVLKEGGSLAAKQCLLNGAPELATDWLSRRSQFFPEPAGGLLSIRPQNGWSFIRIPGKESLITDSGKLYALDVLLTRLKSQGHRVLIYSQMTRMIDLLEEYMVYRKHTYMRLDGSSKISERRDMVADFQTRNDIFVFLLSTRAGGLGINLTAADTVIFYDSDWNPTVDQQAMDRAHRLGQTKQVTVYRLICKGTIEERILQRAKEKSEIQRMVISGGNFKPDTLKPKEVVSLLLDDEELEKKLRLRQEEKRQQEESNRVKERKRKREKYAEKKKKEDELDGKRRKEGVNLVIPFVPSADNSNLSADGDDSFISVDSAMPSPFSEISISSELHTGSIPPDESSSDMLVIVDDPASSAPQSRATNSPASITGSVSDTVNGISIQEVPAAGRGHSARSRGRPKGSGSTAKGAGKGRSRKSTAGSAAAMAGAKAGAAAASAAAYAAYGYNVSKGISASSPLQTSIVRPAGLADFGPSSASSPLSSPLNKGNNIPGTPKSLHMTSSLASDSLIRKQGKGTNPSGGR</sequence>
<protein>
    <recommendedName>
        <fullName evidence="9">Chromatin-remodeling ATPase INO80</fullName>
        <ecNumber evidence="1">3.6.4.-</ecNumber>
    </recommendedName>
    <alternativeName>
        <fullName evidence="9">DNA helicase-related INO80 complex homolog 1</fullName>
    </alternativeName>
    <alternativeName>
        <fullName evidence="9">DNA helicase-related protein INO80</fullName>
    </alternativeName>
</protein>